<organism>
    <name type="scientific">Danio rerio</name>
    <name type="common">Zebrafish</name>
    <name type="synonym">Brachydanio rerio</name>
    <dbReference type="NCBI Taxonomy" id="7955"/>
    <lineage>
        <taxon>Eukaryota</taxon>
        <taxon>Metazoa</taxon>
        <taxon>Chordata</taxon>
        <taxon>Craniata</taxon>
        <taxon>Vertebrata</taxon>
        <taxon>Euteleostomi</taxon>
        <taxon>Actinopterygii</taxon>
        <taxon>Neopterygii</taxon>
        <taxon>Teleostei</taxon>
        <taxon>Ostariophysi</taxon>
        <taxon>Cypriniformes</taxon>
        <taxon>Danionidae</taxon>
        <taxon>Danioninae</taxon>
        <taxon>Danio</taxon>
    </lineage>
</organism>
<protein>
    <recommendedName>
        <fullName>E3 ubiquitin-protein ligase TM129</fullName>
        <ecNumber>2.3.2.27</ecNumber>
    </recommendedName>
    <alternativeName>
        <fullName evidence="3">RING-type E3 ubiquitin transferase TM129</fullName>
    </alternativeName>
</protein>
<accession>Q6PD82</accession>
<name>TM129_DANRE</name>
<gene>
    <name type="primary">tmem129</name>
    <name type="ORF">zgc:63798</name>
</gene>
<evidence type="ECO:0000250" key="1">
    <source>
        <dbReference type="UniProtKB" id="A0AVI4"/>
    </source>
</evidence>
<evidence type="ECO:0000255" key="2"/>
<evidence type="ECO:0000305" key="3"/>
<keyword id="KW-0256">Endoplasmic reticulum</keyword>
<keyword id="KW-0472">Membrane</keyword>
<keyword id="KW-0479">Metal-binding</keyword>
<keyword id="KW-1185">Reference proteome</keyword>
<keyword id="KW-0808">Transferase</keyword>
<keyword id="KW-0812">Transmembrane</keyword>
<keyword id="KW-1133">Transmembrane helix</keyword>
<keyword id="KW-0833">Ubl conjugation pathway</keyword>
<keyword id="KW-0834">Unfolded protein response</keyword>
<keyword id="KW-0862">Zinc</keyword>
<keyword id="KW-0863">Zinc-finger</keyword>
<feature type="chain" id="PRO_0000291044" description="E3 ubiquitin-protein ligase TM129">
    <location>
        <begin position="1"/>
        <end position="361"/>
    </location>
</feature>
<feature type="topological domain" description="Lumenal" evidence="2">
    <location>
        <begin position="1"/>
        <end position="6"/>
    </location>
</feature>
<feature type="transmembrane region" description="Helical" evidence="2">
    <location>
        <begin position="7"/>
        <end position="27"/>
    </location>
</feature>
<feature type="topological domain" description="Cytoplasmic" evidence="2">
    <location>
        <begin position="28"/>
        <end position="56"/>
    </location>
</feature>
<feature type="transmembrane region" description="Helical" evidence="2">
    <location>
        <begin position="57"/>
        <end position="77"/>
    </location>
</feature>
<feature type="topological domain" description="Lumenal" evidence="2">
    <location>
        <begin position="78"/>
        <end position="94"/>
    </location>
</feature>
<feature type="transmembrane region" description="Helical" evidence="2">
    <location>
        <begin position="95"/>
        <end position="115"/>
    </location>
</feature>
<feature type="topological domain" description="Cytoplasmic" evidence="2">
    <location>
        <begin position="116"/>
        <end position="361"/>
    </location>
</feature>
<feature type="zinc finger region" description="RING-type; degenerate">
    <location>
        <begin position="285"/>
        <end position="349"/>
    </location>
</feature>
<comment type="function">
    <text evidence="1">E3 ubiquitin-protein ligase involved in ER-associated protein degradation, preferentially associates with the E2 enzyme UBE2J2.</text>
</comment>
<comment type="catalytic activity">
    <reaction>
        <text>S-ubiquitinyl-[E2 ubiquitin-conjugating enzyme]-L-cysteine + [acceptor protein]-L-lysine = [E2 ubiquitin-conjugating enzyme]-L-cysteine + N(6)-ubiquitinyl-[acceptor protein]-L-lysine.</text>
        <dbReference type="EC" id="2.3.2.27"/>
    </reaction>
</comment>
<comment type="pathway">
    <text>Protein modification; protein ubiquitination.</text>
</comment>
<comment type="subunit">
    <text evidence="1">Integral component of ER-resident dislocation complexes.</text>
</comment>
<comment type="subcellular location">
    <subcellularLocation>
        <location evidence="1">Endoplasmic reticulum membrane</location>
        <topology evidence="1">Multi-pass membrane protein</topology>
    </subcellularLocation>
</comment>
<comment type="domain">
    <text evidence="1">The RING-type zinc finger domain is responsible for E3 ubiquitin ligase activity.</text>
</comment>
<comment type="similarity">
    <text evidence="3">Belongs to the TMEM129 family.</text>
</comment>
<sequence>MDRPDATFTLAYVVFALCFVFTPNEFRSAGFTVQHMFSEWLGSEDISFIQHHIRRTTLTVLFHSFLPLGYYIGMCFAAPEQNLMYVHHASQGWQMYFGLSLVIQLLSCALAFYWSRRGWANHPICKALSVHALPQSSWRAVASSINTEFRRIDKFASGSPSARVIVTDTWVMKVTTYSLHVALHQDCHLTVTDSKHHSLSPDLNTPVQIVTITVGSINPRVKSFDIRLKSTEYAELQEKLHAPIRNAANVVIHLTMSELFLETFKSYVRMNVVYKCPSGQELEPCIGCMQVNANVKLLCLCQSDEGECQQCYCRPMWCLTCMGKWFASRQDQQQPETWLSSRVPCPTCRAKFCILDVCPIE</sequence>
<proteinExistence type="evidence at transcript level"/>
<dbReference type="EC" id="2.3.2.27"/>
<dbReference type="EMBL" id="BC058876">
    <property type="protein sequence ID" value="AAH58876.1"/>
    <property type="molecule type" value="mRNA"/>
</dbReference>
<dbReference type="RefSeq" id="NP_998612.1">
    <property type="nucleotide sequence ID" value="NM_213447.1"/>
</dbReference>
<dbReference type="SMR" id="Q6PD82"/>
<dbReference type="FunCoup" id="Q6PD82">
    <property type="interactions" value="2606"/>
</dbReference>
<dbReference type="STRING" id="7955.ENSDARP00000101988"/>
<dbReference type="PaxDb" id="7955-ENSDARP00000101988"/>
<dbReference type="GeneID" id="406756"/>
<dbReference type="KEGG" id="dre:406756"/>
<dbReference type="AGR" id="ZFIN:ZDB-GENE-040426-2796"/>
<dbReference type="CTD" id="92305"/>
<dbReference type="ZFIN" id="ZDB-GENE-040426-2796">
    <property type="gene designation" value="tmem129"/>
</dbReference>
<dbReference type="eggNOG" id="KOG3899">
    <property type="taxonomic scope" value="Eukaryota"/>
</dbReference>
<dbReference type="InParanoid" id="Q6PD82"/>
<dbReference type="OrthoDB" id="10055027at2759"/>
<dbReference type="PhylomeDB" id="Q6PD82"/>
<dbReference type="UniPathway" id="UPA00143"/>
<dbReference type="PRO" id="PR:Q6PD82"/>
<dbReference type="Proteomes" id="UP000000437">
    <property type="component" value="Chromosome 14"/>
</dbReference>
<dbReference type="GO" id="GO:0005783">
    <property type="term" value="C:endoplasmic reticulum"/>
    <property type="evidence" value="ECO:0000318"/>
    <property type="project" value="GO_Central"/>
</dbReference>
<dbReference type="GO" id="GO:0005789">
    <property type="term" value="C:endoplasmic reticulum membrane"/>
    <property type="evidence" value="ECO:0007669"/>
    <property type="project" value="UniProtKB-SubCell"/>
</dbReference>
<dbReference type="GO" id="GO:0061630">
    <property type="term" value="F:ubiquitin protein ligase activity"/>
    <property type="evidence" value="ECO:0000318"/>
    <property type="project" value="GO_Central"/>
</dbReference>
<dbReference type="GO" id="GO:0008270">
    <property type="term" value="F:zinc ion binding"/>
    <property type="evidence" value="ECO:0007669"/>
    <property type="project" value="UniProtKB-KW"/>
</dbReference>
<dbReference type="GO" id="GO:0016567">
    <property type="term" value="P:protein ubiquitination"/>
    <property type="evidence" value="ECO:0007669"/>
    <property type="project" value="UniProtKB-UniPathway"/>
</dbReference>
<dbReference type="GO" id="GO:0006986">
    <property type="term" value="P:response to unfolded protein"/>
    <property type="evidence" value="ECO:0007669"/>
    <property type="project" value="UniProtKB-KW"/>
</dbReference>
<dbReference type="InterPro" id="IPR018801">
    <property type="entry name" value="TM129"/>
</dbReference>
<dbReference type="PANTHER" id="PTHR31322">
    <property type="entry name" value="E3 UBIQUITIN-PROTEIN LIGASE TM129"/>
    <property type="match status" value="1"/>
</dbReference>
<dbReference type="PANTHER" id="PTHR31322:SF2">
    <property type="entry name" value="E3 UBIQUITIN-PROTEIN LIGASE TM129"/>
    <property type="match status" value="1"/>
</dbReference>
<dbReference type="Pfam" id="PF10272">
    <property type="entry name" value="Tmpp129"/>
    <property type="match status" value="1"/>
</dbReference>
<reference key="1">
    <citation type="submission" date="2003-10" db="EMBL/GenBank/DDBJ databases">
        <authorList>
            <consortium name="NIH - Zebrafish Gene Collection (ZGC) project"/>
        </authorList>
    </citation>
    <scope>NUCLEOTIDE SEQUENCE [LARGE SCALE MRNA]</scope>
</reference>